<dbReference type="GO" id="GO:0042597">
    <property type="term" value="C:periplasmic space"/>
    <property type="evidence" value="ECO:0007669"/>
    <property type="project" value="UniProtKB-SubCell"/>
</dbReference>
<dbReference type="GO" id="GO:0046872">
    <property type="term" value="F:metal ion binding"/>
    <property type="evidence" value="ECO:0007669"/>
    <property type="project" value="UniProtKB-KW"/>
</dbReference>
<dbReference type="GO" id="GO:0009061">
    <property type="term" value="P:anaerobic respiration"/>
    <property type="evidence" value="ECO:0007669"/>
    <property type="project" value="UniProtKB-KW"/>
</dbReference>
<reference key="1">
    <citation type="journal article" date="1997" name="Biochemistry">
        <title>Biochemical and spectroscopic characterization of two new cytochromes isolated from Desulfuromonas acetoxidans.</title>
        <authorList>
            <person name="Bruschi M."/>
            <person name="Woudstra M."/>
            <person name="Guigliarelli B."/>
            <person name="Asso M."/>
            <person name="Lojou E."/>
            <person name="Petillot Y."/>
            <person name="Abergel C."/>
        </authorList>
    </citation>
    <scope>PROTEIN SEQUENCE</scope>
    <scope>CHARACTERIZATION</scope>
</reference>
<comment type="function">
    <text>Participates in sulfate respiration coupled with phosphorylation by transferring electrons from the enzyme dehydrogenase to ferredoxin.</text>
</comment>
<comment type="biophysicochemical properties">
    <redoxPotential>
        <text>E(0) is -220 mV.</text>
    </redoxPotential>
</comment>
<comment type="subunit">
    <text>Monomer.</text>
</comment>
<comment type="subcellular location">
    <subcellularLocation>
        <location>Periplasm</location>
    </subcellularLocation>
</comment>
<comment type="PTM">
    <text>Binds 1 heme group per subunit.</text>
</comment>
<sequence>ADSLTQFDGIKGRYSHEAFYEEKACDSCHLNK</sequence>
<keyword id="KW-0903">Direct protein sequencing</keyword>
<keyword id="KW-0249">Electron transport</keyword>
<keyword id="KW-0349">Heme</keyword>
<keyword id="KW-0408">Iron</keyword>
<keyword id="KW-0479">Metal-binding</keyword>
<keyword id="KW-0574">Periplasm</keyword>
<keyword id="KW-0763">Sulfate respiration</keyword>
<keyword id="KW-0813">Transport</keyword>
<feature type="chain" id="PRO_0000108355" description="Cytochrome c3, 10 kDa">
    <location>
        <begin position="1"/>
        <end position="32" status="greater than"/>
    </location>
</feature>
<feature type="binding site" description="axial binding residue">
    <location>
        <position position="16"/>
    </location>
    <ligand>
        <name>heme</name>
        <dbReference type="ChEBI" id="CHEBI:30413"/>
    </ligand>
    <ligandPart>
        <name>Fe</name>
        <dbReference type="ChEBI" id="CHEBI:18248"/>
    </ligandPart>
</feature>
<feature type="binding site" description="covalent">
    <location>
        <position position="25"/>
    </location>
    <ligand>
        <name>heme</name>
        <dbReference type="ChEBI" id="CHEBI:30413"/>
    </ligand>
</feature>
<feature type="binding site" description="covalent">
    <location>
        <position position="28"/>
    </location>
    <ligand>
        <name>heme</name>
        <dbReference type="ChEBI" id="CHEBI:30413"/>
    </ligand>
</feature>
<feature type="binding site" description="axial binding residue">
    <location>
        <position position="29"/>
    </location>
    <ligand>
        <name>heme</name>
        <dbReference type="ChEBI" id="CHEBI:30413"/>
    </ligand>
    <ligandPart>
        <name>Fe</name>
        <dbReference type="ChEBI" id="CHEBI:18248"/>
    </ligandPart>
</feature>
<feature type="non-terminal residue">
    <location>
        <position position="32"/>
    </location>
</feature>
<accession>P81078</accession>
<proteinExistence type="evidence at protein level"/>
<name>CYC31_DESAC</name>
<protein>
    <recommendedName>
        <fullName>Cytochrome c3, 10 kDa</fullName>
    </recommendedName>
</protein>
<organism>
    <name type="scientific">Desulfuromonas acetoxidans</name>
    <name type="common">Chloropseudomonas ethylica</name>
    <dbReference type="NCBI Taxonomy" id="891"/>
    <lineage>
        <taxon>Bacteria</taxon>
        <taxon>Pseudomonadati</taxon>
        <taxon>Thermodesulfobacteriota</taxon>
        <taxon>Desulfuromonadia</taxon>
        <taxon>Desulfuromonadales</taxon>
        <taxon>Desulfuromonadaceae</taxon>
        <taxon>Desulfuromonas</taxon>
    </lineage>
</organism>